<name>NTDP_SHOC1</name>
<keyword id="KW-0378">Hydrolase</keyword>
<keyword id="KW-0460">Magnesium</keyword>
<keyword id="KW-0479">Metal-binding</keyword>
<keyword id="KW-1185">Reference proteome</keyword>
<proteinExistence type="inferred from homology"/>
<gene>
    <name type="ordered locus">ABC1315</name>
</gene>
<protein>
    <recommendedName>
        <fullName evidence="1">Nucleoside triphosphate/diphosphate phosphatase</fullName>
        <ecNumber evidence="1">3.6.1.15</ecNumber>
        <ecNumber evidence="1">3.6.1.6</ecNumber>
    </recommendedName>
</protein>
<reference key="1">
    <citation type="submission" date="2003-10" db="EMBL/GenBank/DDBJ databases">
        <title>The complete genome sequence of the alkaliphilic Bacillus clausii KSM-K16.</title>
        <authorList>
            <person name="Takaki Y."/>
            <person name="Kageyama Y."/>
            <person name="Shimamura S."/>
            <person name="Suzuki H."/>
            <person name="Nishi S."/>
            <person name="Hatada Y."/>
            <person name="Kawai S."/>
            <person name="Ito S."/>
            <person name="Horikoshi K."/>
        </authorList>
    </citation>
    <scope>NUCLEOTIDE SEQUENCE [LARGE SCALE GENOMIC DNA]</scope>
    <source>
        <strain>KSM-K16</strain>
    </source>
</reference>
<dbReference type="EC" id="3.6.1.15" evidence="1"/>
<dbReference type="EC" id="3.6.1.6" evidence="1"/>
<dbReference type="EMBL" id="AP006627">
    <property type="protein sequence ID" value="BAD63853.1"/>
    <property type="molecule type" value="Genomic_DNA"/>
</dbReference>
<dbReference type="RefSeq" id="WP_011246166.1">
    <property type="nucleotide sequence ID" value="NC_006582.1"/>
</dbReference>
<dbReference type="SMR" id="Q5WIF2"/>
<dbReference type="STRING" id="66692.ABC1315"/>
<dbReference type="KEGG" id="bcl:ABC1315"/>
<dbReference type="eggNOG" id="COG3557">
    <property type="taxonomic scope" value="Bacteria"/>
</dbReference>
<dbReference type="HOGENOM" id="CLU_109787_1_0_9"/>
<dbReference type="OrthoDB" id="1645325at2"/>
<dbReference type="Proteomes" id="UP000001168">
    <property type="component" value="Chromosome"/>
</dbReference>
<dbReference type="GO" id="GO:0000287">
    <property type="term" value="F:magnesium ion binding"/>
    <property type="evidence" value="ECO:0007669"/>
    <property type="project" value="UniProtKB-UniRule"/>
</dbReference>
<dbReference type="GO" id="GO:0017110">
    <property type="term" value="F:nucleoside diphosphate phosphatase activity"/>
    <property type="evidence" value="ECO:0007669"/>
    <property type="project" value="UniProtKB-UniRule"/>
</dbReference>
<dbReference type="GO" id="GO:0017111">
    <property type="term" value="F:ribonucleoside triphosphate phosphatase activity"/>
    <property type="evidence" value="ECO:0007669"/>
    <property type="project" value="UniProtKB-UniRule"/>
</dbReference>
<dbReference type="Gene3D" id="2.40.380.10">
    <property type="entry name" value="FomD-like"/>
    <property type="match status" value="1"/>
</dbReference>
<dbReference type="HAMAP" id="MF_01568">
    <property type="entry name" value="Ntdp"/>
    <property type="match status" value="1"/>
</dbReference>
<dbReference type="InterPro" id="IPR007295">
    <property type="entry name" value="DUF402"/>
</dbReference>
<dbReference type="InterPro" id="IPR035930">
    <property type="entry name" value="FomD-like_sf"/>
</dbReference>
<dbReference type="InterPro" id="IPR050212">
    <property type="entry name" value="Ntdp-like"/>
</dbReference>
<dbReference type="InterPro" id="IPR016882">
    <property type="entry name" value="SA1684"/>
</dbReference>
<dbReference type="NCBIfam" id="NF010183">
    <property type="entry name" value="PRK13662.1"/>
    <property type="match status" value="1"/>
</dbReference>
<dbReference type="PANTHER" id="PTHR39159">
    <property type="match status" value="1"/>
</dbReference>
<dbReference type="PANTHER" id="PTHR39159:SF1">
    <property type="entry name" value="UPF0374 PROTEIN YGAC"/>
    <property type="match status" value="1"/>
</dbReference>
<dbReference type="Pfam" id="PF04167">
    <property type="entry name" value="DUF402"/>
    <property type="match status" value="1"/>
</dbReference>
<dbReference type="PIRSF" id="PIRSF028345">
    <property type="entry name" value="UCP028345"/>
    <property type="match status" value="1"/>
</dbReference>
<dbReference type="SUPFAM" id="SSF159234">
    <property type="entry name" value="FomD-like"/>
    <property type="match status" value="1"/>
</dbReference>
<evidence type="ECO:0000255" key="1">
    <source>
        <dbReference type="HAMAP-Rule" id="MF_01568"/>
    </source>
</evidence>
<accession>Q5WIF2</accession>
<feature type="chain" id="PRO_0000248091" description="Nucleoside triphosphate/diphosphate phosphatase">
    <location>
        <begin position="1"/>
        <end position="175"/>
    </location>
</feature>
<feature type="active site" description="Proton donor" evidence="1">
    <location>
        <position position="23"/>
    </location>
</feature>
<feature type="binding site" evidence="1">
    <location>
        <position position="87"/>
    </location>
    <ligand>
        <name>Mg(2+)</name>
        <dbReference type="ChEBI" id="CHEBI:18420"/>
        <label>1</label>
    </ligand>
</feature>
<feature type="binding site" evidence="1">
    <location>
        <position position="103"/>
    </location>
    <ligand>
        <name>Mg(2+)</name>
        <dbReference type="ChEBI" id="CHEBI:18420"/>
        <label>1</label>
    </ligand>
</feature>
<feature type="binding site" evidence="1">
    <location>
        <position position="105"/>
    </location>
    <ligand>
        <name>Mg(2+)</name>
        <dbReference type="ChEBI" id="CHEBI:18420"/>
        <label>2</label>
    </ligand>
</feature>
<feature type="binding site" evidence="1">
    <location>
        <position position="107"/>
    </location>
    <ligand>
        <name>Mg(2+)</name>
        <dbReference type="ChEBI" id="CHEBI:18420"/>
        <label>1</label>
    </ligand>
</feature>
<feature type="binding site" evidence="1">
    <location>
        <position position="107"/>
    </location>
    <ligand>
        <name>Mg(2+)</name>
        <dbReference type="ChEBI" id="CHEBI:18420"/>
        <label>2</label>
    </ligand>
</feature>
<feature type="binding site" evidence="1">
    <location>
        <position position="120"/>
    </location>
    <ligand>
        <name>Mg(2+)</name>
        <dbReference type="ChEBI" id="CHEBI:18420"/>
        <label>2</label>
    </ligand>
</feature>
<feature type="binding site" evidence="1">
    <location>
        <position position="123"/>
    </location>
    <ligand>
        <name>Mg(2+)</name>
        <dbReference type="ChEBI" id="CHEBI:18420"/>
        <label>2</label>
    </ligand>
</feature>
<sequence length="175" mass="21031">MSFPKEGSTIQIHSYKHNGKLHRIWEDTIVLKGTSKVVVAGNDRIIVREADGRNWRTREPAICYFDAEQWFNMICMLRADGIYYYCNLGTPFTWDEEALKYIDYDLDIKVYPDMTMKLLDEDEYELHSKLMKYPPELDVILRKSVDELISWIHQRKGPFAPQFVENWYERYLQYR</sequence>
<comment type="function">
    <text evidence="1">Has nucleoside phosphatase activity towards nucleoside triphosphates and nucleoside diphosphates.</text>
</comment>
<comment type="catalytic activity">
    <reaction evidence="1">
        <text>a ribonucleoside 5'-triphosphate + H2O = a ribonucleoside 5'-diphosphate + phosphate + H(+)</text>
        <dbReference type="Rhea" id="RHEA:23680"/>
        <dbReference type="ChEBI" id="CHEBI:15377"/>
        <dbReference type="ChEBI" id="CHEBI:15378"/>
        <dbReference type="ChEBI" id="CHEBI:43474"/>
        <dbReference type="ChEBI" id="CHEBI:57930"/>
        <dbReference type="ChEBI" id="CHEBI:61557"/>
        <dbReference type="EC" id="3.6.1.15"/>
    </reaction>
</comment>
<comment type="catalytic activity">
    <reaction evidence="1">
        <text>a ribonucleoside 5'-diphosphate + H2O = a ribonucleoside 5'-phosphate + phosphate + H(+)</text>
        <dbReference type="Rhea" id="RHEA:36799"/>
        <dbReference type="ChEBI" id="CHEBI:15377"/>
        <dbReference type="ChEBI" id="CHEBI:15378"/>
        <dbReference type="ChEBI" id="CHEBI:43474"/>
        <dbReference type="ChEBI" id="CHEBI:57930"/>
        <dbReference type="ChEBI" id="CHEBI:58043"/>
        <dbReference type="EC" id="3.6.1.6"/>
    </reaction>
</comment>
<comment type="cofactor">
    <cofactor evidence="1">
        <name>Mg(2+)</name>
        <dbReference type="ChEBI" id="CHEBI:18420"/>
    </cofactor>
</comment>
<comment type="similarity">
    <text evidence="1">Belongs to the Ntdp family.</text>
</comment>
<organism>
    <name type="scientific">Shouchella clausii (strain KSM-K16)</name>
    <name type="common">Alkalihalobacillus clausii</name>
    <dbReference type="NCBI Taxonomy" id="66692"/>
    <lineage>
        <taxon>Bacteria</taxon>
        <taxon>Bacillati</taxon>
        <taxon>Bacillota</taxon>
        <taxon>Bacilli</taxon>
        <taxon>Bacillales</taxon>
        <taxon>Bacillaceae</taxon>
        <taxon>Shouchella</taxon>
    </lineage>
</organism>